<protein>
    <recommendedName>
        <fullName>Putative BTB/POZ domain and WD-repeat protein R786</fullName>
    </recommendedName>
</protein>
<proteinExistence type="inferred from homology"/>
<gene>
    <name type="ordered locus">MIMI_L786</name>
</gene>
<name>YL786_MIMIV</name>
<keyword id="KW-1185">Reference proteome</keyword>
<keyword id="KW-0677">Repeat</keyword>
<keyword id="KW-0853">WD repeat</keyword>
<evidence type="ECO:0000255" key="1">
    <source>
        <dbReference type="PROSITE-ProRule" id="PRU00037"/>
    </source>
</evidence>
<evidence type="ECO:0000305" key="2"/>
<feature type="chain" id="PRO_0000186245" description="Putative BTB/POZ domain and WD-repeat protein R786">
    <location>
        <begin position="1"/>
        <end position="492"/>
    </location>
</feature>
<feature type="domain" description="BTB" evidence="1">
    <location>
        <begin position="16"/>
        <end position="86"/>
    </location>
</feature>
<feature type="repeat" description="WD 1">
    <location>
        <begin position="241"/>
        <end position="281"/>
    </location>
</feature>
<feature type="repeat" description="WD 2">
    <location>
        <begin position="286"/>
        <end position="325"/>
    </location>
</feature>
<accession>Q5UPR9</accession>
<organismHost>
    <name type="scientific">Acanthamoeba polyphaga</name>
    <name type="common">Amoeba</name>
    <dbReference type="NCBI Taxonomy" id="5757"/>
</organismHost>
<comment type="similarity">
    <text evidence="2">Belongs to the mimivirus BTB/WD family.</text>
</comment>
<organism>
    <name type="scientific">Acanthamoeba polyphaga mimivirus</name>
    <name type="common">APMV</name>
    <dbReference type="NCBI Taxonomy" id="212035"/>
    <lineage>
        <taxon>Viruses</taxon>
        <taxon>Varidnaviria</taxon>
        <taxon>Bamfordvirae</taxon>
        <taxon>Nucleocytoviricota</taxon>
        <taxon>Megaviricetes</taxon>
        <taxon>Imitervirales</taxon>
        <taxon>Mimiviridae</taxon>
        <taxon>Megamimivirinae</taxon>
        <taxon>Mimivirus</taxon>
        <taxon>Mimivirus bradfordmassiliense</taxon>
    </lineage>
</organism>
<dbReference type="EMBL" id="AY653733">
    <property type="protein sequence ID" value="AAV51046.1"/>
    <property type="molecule type" value="Genomic_DNA"/>
</dbReference>
<dbReference type="SMR" id="Q5UPR9"/>
<dbReference type="KEGG" id="vg:9925447"/>
<dbReference type="OrthoDB" id="34887at10239"/>
<dbReference type="Proteomes" id="UP000001134">
    <property type="component" value="Genome"/>
</dbReference>
<dbReference type="CDD" id="cd18186">
    <property type="entry name" value="BTB_POZ_ZBTB_KLHL-like"/>
    <property type="match status" value="1"/>
</dbReference>
<dbReference type="Gene3D" id="3.30.710.10">
    <property type="entry name" value="Potassium Channel Kv1.1, Chain A"/>
    <property type="match status" value="1"/>
</dbReference>
<dbReference type="Gene3D" id="2.130.10.10">
    <property type="entry name" value="YVTN repeat-like/Quinoprotein amine dehydrogenase"/>
    <property type="match status" value="1"/>
</dbReference>
<dbReference type="InterPro" id="IPR000210">
    <property type="entry name" value="BTB/POZ_dom"/>
</dbReference>
<dbReference type="InterPro" id="IPR011333">
    <property type="entry name" value="SKP1/BTB/POZ_sf"/>
</dbReference>
<dbReference type="InterPro" id="IPR015943">
    <property type="entry name" value="WD40/YVTN_repeat-like_dom_sf"/>
</dbReference>
<dbReference type="InterPro" id="IPR036322">
    <property type="entry name" value="WD40_repeat_dom_sf"/>
</dbReference>
<dbReference type="Pfam" id="PF00651">
    <property type="entry name" value="BTB"/>
    <property type="match status" value="1"/>
</dbReference>
<dbReference type="SUPFAM" id="SSF54695">
    <property type="entry name" value="POZ domain"/>
    <property type="match status" value="1"/>
</dbReference>
<dbReference type="SUPFAM" id="SSF50978">
    <property type="entry name" value="WD40 repeat-like"/>
    <property type="match status" value="1"/>
</dbReference>
<dbReference type="PROSITE" id="PS50097">
    <property type="entry name" value="BTB"/>
    <property type="match status" value="1"/>
</dbReference>
<dbReference type="PROSITE" id="PS00678">
    <property type="entry name" value="WD_REPEATS_1"/>
    <property type="match status" value="1"/>
</dbReference>
<sequence>MDFNILYSFVSNKTFTDVEIVLIDEINRVNMNVHKAVLASSSQYFLNLFTKFSETNKSTITIRVRDSQISSDIICSFYGQIVDSTNYPDWKYTLLKYQCLDYFSLDYNIDILTGLKIPSEGFDLLLETANTIGYRNEINKLIAKNIPDNYDLSIFSDEFLGSLRKYICKHNIITANFKSINIYDVITGNKLSSLSLNNNFSHVCKVGKNIIAIVYYCADKIFLFDLVSRDVIDTLHNLDIQSSCDMTAICYIKSLNHLVTANSNNQLIVWDLTTRQIIKIKKVNRLINRLIANHTIITDYNLFISIGYNESILVWDKNYTISKGIDSPNKITTYSASGRELILANARYIKIFDIDEGKILYKTNNDTFRTPYDIINICDNSYILFDSDNEPICYLIYDWKNVSKIRLNRSKKNYDNIFCKKFPPESVNYSANDTNSNILIVVTDYHTVYAQINGKKYGPFVVKPNNIAGVFFVKDKKATNLLNSINDLIKHN</sequence>
<reference key="1">
    <citation type="journal article" date="2004" name="Science">
        <title>The 1.2-megabase genome sequence of Mimivirus.</title>
        <authorList>
            <person name="Raoult D."/>
            <person name="Audic S."/>
            <person name="Robert C."/>
            <person name="Abergel C."/>
            <person name="Renesto P."/>
            <person name="Ogata H."/>
            <person name="La Scola B."/>
            <person name="Susan M."/>
            <person name="Claverie J.-M."/>
        </authorList>
    </citation>
    <scope>NUCLEOTIDE SEQUENCE [LARGE SCALE GENOMIC DNA]</scope>
    <source>
        <strain>Rowbotham-Bradford</strain>
    </source>
</reference>